<name>MSBP1_ORYSJ</name>
<evidence type="ECO:0000250" key="1"/>
<evidence type="ECO:0000250" key="2">
    <source>
        <dbReference type="UniProtKB" id="Q9XFM6"/>
    </source>
</evidence>
<evidence type="ECO:0000255" key="3"/>
<evidence type="ECO:0000255" key="4">
    <source>
        <dbReference type="PROSITE-ProRule" id="PRU00279"/>
    </source>
</evidence>
<evidence type="ECO:0000256" key="5">
    <source>
        <dbReference type="SAM" id="MobiDB-lite"/>
    </source>
</evidence>
<evidence type="ECO:0000269" key="6">
    <source>
    </source>
</evidence>
<evidence type="ECO:0000269" key="7">
    <source>
    </source>
</evidence>
<evidence type="ECO:0000303" key="8">
    <source>
    </source>
</evidence>
<evidence type="ECO:0000303" key="9">
    <source>
    </source>
</evidence>
<evidence type="ECO:0000305" key="10"/>
<evidence type="ECO:0000305" key="11">
    <source>
    </source>
</evidence>
<evidence type="ECO:0000312" key="12">
    <source>
        <dbReference type="EMBL" id="AAG13629.1"/>
    </source>
</evidence>
<evidence type="ECO:0000312" key="13">
    <source>
        <dbReference type="EMBL" id="ABB47845.2"/>
    </source>
</evidence>
<evidence type="ECO:0000312" key="14">
    <source>
        <dbReference type="EMBL" id="BAF26907.1"/>
    </source>
</evidence>
<dbReference type="EMBL" id="AC078840">
    <property type="protein sequence ID" value="AAG13629.1"/>
    <property type="molecule type" value="Genomic_DNA"/>
</dbReference>
<dbReference type="EMBL" id="DP000086">
    <property type="protein sequence ID" value="ABB47845.2"/>
    <property type="molecule type" value="Genomic_DNA"/>
</dbReference>
<dbReference type="EMBL" id="AP008216">
    <property type="protein sequence ID" value="BAF26907.1"/>
    <property type="molecule type" value="Genomic_DNA"/>
</dbReference>
<dbReference type="EMBL" id="AP014966">
    <property type="protein sequence ID" value="BAT11541.1"/>
    <property type="molecule type" value="Genomic_DNA"/>
</dbReference>
<dbReference type="EMBL" id="CM000147">
    <property type="protein sequence ID" value="EAZ16597.1"/>
    <property type="molecule type" value="Genomic_DNA"/>
</dbReference>
<dbReference type="EMBL" id="AK069511">
    <property type="protein sequence ID" value="BAG91467.1"/>
    <property type="molecule type" value="mRNA"/>
</dbReference>
<dbReference type="EMBL" id="AK105774">
    <property type="protein sequence ID" value="BAG97358.1"/>
    <property type="molecule type" value="mRNA"/>
</dbReference>
<dbReference type="SMR" id="Q9FVZ7"/>
<dbReference type="FunCoup" id="Q9FVZ7">
    <property type="interactions" value="3595"/>
</dbReference>
<dbReference type="STRING" id="39947.Q9FVZ7"/>
<dbReference type="CarbonylDB" id="Q9FVZ7"/>
<dbReference type="PaxDb" id="39947-Q9FVZ7"/>
<dbReference type="EnsemblPlants" id="Os10t0502600-01">
    <property type="protein sequence ID" value="Os10t0502600-01"/>
    <property type="gene ID" value="Os10g0502600"/>
</dbReference>
<dbReference type="EnsemblPlants" id="Os10t0502600-03">
    <property type="protein sequence ID" value="Os10t0502600-03"/>
    <property type="gene ID" value="Os10g0502600"/>
</dbReference>
<dbReference type="Gramene" id="Os10t0502600-01">
    <property type="protein sequence ID" value="Os10t0502600-01"/>
    <property type="gene ID" value="Os10g0502600"/>
</dbReference>
<dbReference type="Gramene" id="Os10t0502600-03">
    <property type="protein sequence ID" value="Os10t0502600-03"/>
    <property type="gene ID" value="Os10g0502600"/>
</dbReference>
<dbReference type="KEGG" id="dosa:Os10g0502600"/>
<dbReference type="KEGG" id="osa:4349046"/>
<dbReference type="eggNOG" id="KOG1110">
    <property type="taxonomic scope" value="Eukaryota"/>
</dbReference>
<dbReference type="HOGENOM" id="CLU_042860_0_2_1"/>
<dbReference type="InParanoid" id="Q9FVZ7"/>
<dbReference type="OMA" id="DYPQPEP"/>
<dbReference type="OrthoDB" id="547796at2759"/>
<dbReference type="Proteomes" id="UP000000763">
    <property type="component" value="Chromosome 10"/>
</dbReference>
<dbReference type="Proteomes" id="UP000007752">
    <property type="component" value="Chromosome 10"/>
</dbReference>
<dbReference type="Proteomes" id="UP000059680">
    <property type="component" value="Chromosome 10"/>
</dbReference>
<dbReference type="ExpressionAtlas" id="Q9FVZ7">
    <property type="expression patterns" value="baseline and differential"/>
</dbReference>
<dbReference type="GO" id="GO:0012505">
    <property type="term" value="C:endomembrane system"/>
    <property type="evidence" value="ECO:0000318"/>
    <property type="project" value="GO_Central"/>
</dbReference>
<dbReference type="GO" id="GO:0005783">
    <property type="term" value="C:endoplasmic reticulum"/>
    <property type="evidence" value="ECO:0000318"/>
    <property type="project" value="GO_Central"/>
</dbReference>
<dbReference type="GO" id="GO:0016020">
    <property type="term" value="C:membrane"/>
    <property type="evidence" value="ECO:0000318"/>
    <property type="project" value="GO_Central"/>
</dbReference>
<dbReference type="GO" id="GO:0005886">
    <property type="term" value="C:plasma membrane"/>
    <property type="evidence" value="ECO:0007669"/>
    <property type="project" value="UniProtKB-SubCell"/>
</dbReference>
<dbReference type="GO" id="GO:0005496">
    <property type="term" value="F:steroid binding"/>
    <property type="evidence" value="ECO:0007669"/>
    <property type="project" value="UniProtKB-KW"/>
</dbReference>
<dbReference type="FunFam" id="3.10.120.10:FF:000006">
    <property type="entry name" value="Membrane steroid-binding protein 1"/>
    <property type="match status" value="1"/>
</dbReference>
<dbReference type="Gene3D" id="3.10.120.10">
    <property type="entry name" value="Cytochrome b5-like heme/steroid binding domain"/>
    <property type="match status" value="1"/>
</dbReference>
<dbReference type="InterPro" id="IPR001199">
    <property type="entry name" value="Cyt_B5-like_heme/steroid-bd"/>
</dbReference>
<dbReference type="InterPro" id="IPR036400">
    <property type="entry name" value="Cyt_B5-like_heme/steroid_sf"/>
</dbReference>
<dbReference type="InterPro" id="IPR050577">
    <property type="entry name" value="MAPR/NEUFC/NENF-like"/>
</dbReference>
<dbReference type="PANTHER" id="PTHR10281:SF113">
    <property type="entry name" value="MEMBRANE STEROID-BINDING PROTEIN 2"/>
    <property type="match status" value="1"/>
</dbReference>
<dbReference type="PANTHER" id="PTHR10281">
    <property type="entry name" value="MEMBRANE-ASSOCIATED PROGESTERONE RECEPTOR COMPONENT-RELATED"/>
    <property type="match status" value="1"/>
</dbReference>
<dbReference type="Pfam" id="PF00173">
    <property type="entry name" value="Cyt-b5"/>
    <property type="match status" value="1"/>
</dbReference>
<dbReference type="SMART" id="SM01117">
    <property type="entry name" value="Cyt-b5"/>
    <property type="match status" value="1"/>
</dbReference>
<dbReference type="SUPFAM" id="SSF55856">
    <property type="entry name" value="Cytochrome b5-like heme/steroid binding domain"/>
    <property type="match status" value="1"/>
</dbReference>
<feature type="chain" id="PRO_0000441259" description="Membrane steroid-binding protein 1">
    <location>
        <begin position="1"/>
        <end position="232"/>
    </location>
</feature>
<feature type="transmembrane region" description="Helical" evidence="3">
    <location>
        <begin position="25"/>
        <end position="45"/>
    </location>
</feature>
<feature type="domain" description="Cytochrome b5 heme-binding" evidence="4">
    <location>
        <begin position="71"/>
        <end position="170"/>
    </location>
</feature>
<feature type="region of interest" description="Disordered" evidence="5">
    <location>
        <begin position="48"/>
        <end position="77"/>
    </location>
</feature>
<feature type="region of interest" description="Steroid-binding" evidence="1">
    <location>
        <begin position="73"/>
        <end position="170"/>
    </location>
</feature>
<feature type="region of interest" description="Disordered" evidence="5">
    <location>
        <begin position="172"/>
        <end position="232"/>
    </location>
</feature>
<feature type="compositionally biased region" description="Low complexity" evidence="5">
    <location>
        <begin position="179"/>
        <end position="193"/>
    </location>
</feature>
<feature type="compositionally biased region" description="Basic and acidic residues" evidence="5">
    <location>
        <begin position="194"/>
        <end position="219"/>
    </location>
</feature>
<feature type="sequence conflict" description="In Ref. 5; EAZ16597." evidence="10" ref="5">
    <original>PPP</original>
    <variation>QEL</variation>
    <location>
        <begin position="50"/>
        <end position="52"/>
    </location>
</feature>
<reference key="1">
    <citation type="journal article" date="2003" name="Science">
        <title>In-depth view of structure, activity, and evolution of rice chromosome 10.</title>
        <authorList>
            <person name="Yu Y."/>
            <person name="Rambo T."/>
            <person name="Currie J."/>
            <person name="Saski C."/>
            <person name="Kim H.-R."/>
            <person name="Collura K."/>
            <person name="Thompson S."/>
            <person name="Simmons J."/>
            <person name="Yang T.-J."/>
            <person name="Nah G."/>
            <person name="Patel A.J."/>
            <person name="Thurmond S."/>
            <person name="Henry D."/>
            <person name="Oates R."/>
            <person name="Palmer M."/>
            <person name="Pries G."/>
            <person name="Gibson J."/>
            <person name="Anderson H."/>
            <person name="Paradkar M."/>
            <person name="Crane L."/>
            <person name="Dale J."/>
            <person name="Carver M.B."/>
            <person name="Wood T."/>
            <person name="Frisch D."/>
            <person name="Engler F."/>
            <person name="Soderlund C."/>
            <person name="Palmer L.E."/>
            <person name="Teytelman L."/>
            <person name="Nascimento L."/>
            <person name="De la Bastide M."/>
            <person name="Spiegel L."/>
            <person name="Ware D."/>
            <person name="O'Shaughnessy A."/>
            <person name="Dike S."/>
            <person name="Dedhia N."/>
            <person name="Preston R."/>
            <person name="Huang E."/>
            <person name="Ferraro K."/>
            <person name="Kuit K."/>
            <person name="Miller B."/>
            <person name="Zutavern T."/>
            <person name="Katzenberger F."/>
            <person name="Muller S."/>
            <person name="Balija V."/>
            <person name="Martienssen R.A."/>
            <person name="Stein L."/>
            <person name="Minx P."/>
            <person name="Johnson D."/>
            <person name="Cordum H."/>
            <person name="Mardis E."/>
            <person name="Cheng Z."/>
            <person name="Jiang J."/>
            <person name="Wilson R."/>
            <person name="McCombie W.R."/>
            <person name="Wing R.A."/>
            <person name="Yuan Q."/>
            <person name="Ouyang S."/>
            <person name="Liu J."/>
            <person name="Jones K.M."/>
            <person name="Gansberger K."/>
            <person name="Moffat K."/>
            <person name="Hill J."/>
            <person name="Tsitrin T."/>
            <person name="Overton L."/>
            <person name="Bera J."/>
            <person name="Kim M."/>
            <person name="Jin S."/>
            <person name="Tallon L."/>
            <person name="Ciecko A."/>
            <person name="Pai G."/>
            <person name="Van Aken S."/>
            <person name="Utterback T."/>
            <person name="Reidmuller S."/>
            <person name="Bormann J."/>
            <person name="Feldblyum T."/>
            <person name="Hsiao J."/>
            <person name="Zismann V."/>
            <person name="Blunt S."/>
            <person name="de Vazeille A.R."/>
            <person name="Shaffer T."/>
            <person name="Koo H."/>
            <person name="Suh B."/>
            <person name="Yang Q."/>
            <person name="Haas B."/>
            <person name="Peterson J."/>
            <person name="Pertea M."/>
            <person name="Volfovsky N."/>
            <person name="Wortman J."/>
            <person name="White O."/>
            <person name="Salzberg S.L."/>
            <person name="Fraser C.M."/>
            <person name="Buell C.R."/>
            <person name="Messing J."/>
            <person name="Song R."/>
            <person name="Fuks G."/>
            <person name="Llaca V."/>
            <person name="Kovchak S."/>
            <person name="Young S."/>
            <person name="Bowers J.E."/>
            <person name="Paterson A.H."/>
            <person name="Johns M.A."/>
            <person name="Mao L."/>
            <person name="Pan H."/>
            <person name="Dean R.A."/>
        </authorList>
    </citation>
    <scope>NUCLEOTIDE SEQUENCE [LARGE SCALE GENOMIC DNA]</scope>
    <source>
        <strain>cv. Nipponbare</strain>
    </source>
</reference>
<reference key="2">
    <citation type="journal article" date="2005" name="Nature">
        <title>The map-based sequence of the rice genome.</title>
        <authorList>
            <consortium name="International rice genome sequencing project (IRGSP)"/>
        </authorList>
    </citation>
    <scope>NUCLEOTIDE SEQUENCE [LARGE SCALE GENOMIC DNA]</scope>
    <source>
        <strain>cv. Nipponbare</strain>
    </source>
</reference>
<reference key="3">
    <citation type="journal article" date="2008" name="Nucleic Acids Res.">
        <title>The rice annotation project database (RAP-DB): 2008 update.</title>
        <authorList>
            <consortium name="The rice annotation project (RAP)"/>
        </authorList>
    </citation>
    <scope>GENOME REANNOTATION</scope>
    <source>
        <strain>cv. Nipponbare</strain>
    </source>
</reference>
<reference key="4">
    <citation type="journal article" date="2013" name="Rice">
        <title>Improvement of the Oryza sativa Nipponbare reference genome using next generation sequence and optical map data.</title>
        <authorList>
            <person name="Kawahara Y."/>
            <person name="de la Bastide M."/>
            <person name="Hamilton J.P."/>
            <person name="Kanamori H."/>
            <person name="McCombie W.R."/>
            <person name="Ouyang S."/>
            <person name="Schwartz D.C."/>
            <person name="Tanaka T."/>
            <person name="Wu J."/>
            <person name="Zhou S."/>
            <person name="Childs K.L."/>
            <person name="Davidson R.M."/>
            <person name="Lin H."/>
            <person name="Quesada-Ocampo L."/>
            <person name="Vaillancourt B."/>
            <person name="Sakai H."/>
            <person name="Lee S.S."/>
            <person name="Kim J."/>
            <person name="Numa H."/>
            <person name="Itoh T."/>
            <person name="Buell C.R."/>
            <person name="Matsumoto T."/>
        </authorList>
    </citation>
    <scope>GENOME REANNOTATION</scope>
    <source>
        <strain>cv. Nipponbare</strain>
    </source>
</reference>
<reference key="5">
    <citation type="journal article" date="2005" name="PLoS Biol.">
        <title>The genomes of Oryza sativa: a history of duplications.</title>
        <authorList>
            <person name="Yu J."/>
            <person name="Wang J."/>
            <person name="Lin W."/>
            <person name="Li S."/>
            <person name="Li H."/>
            <person name="Zhou J."/>
            <person name="Ni P."/>
            <person name="Dong W."/>
            <person name="Hu S."/>
            <person name="Zeng C."/>
            <person name="Zhang J."/>
            <person name="Zhang Y."/>
            <person name="Li R."/>
            <person name="Xu Z."/>
            <person name="Li S."/>
            <person name="Li X."/>
            <person name="Zheng H."/>
            <person name="Cong L."/>
            <person name="Lin L."/>
            <person name="Yin J."/>
            <person name="Geng J."/>
            <person name="Li G."/>
            <person name="Shi J."/>
            <person name="Liu J."/>
            <person name="Lv H."/>
            <person name="Li J."/>
            <person name="Wang J."/>
            <person name="Deng Y."/>
            <person name="Ran L."/>
            <person name="Shi X."/>
            <person name="Wang X."/>
            <person name="Wu Q."/>
            <person name="Li C."/>
            <person name="Ren X."/>
            <person name="Wang J."/>
            <person name="Wang X."/>
            <person name="Li D."/>
            <person name="Liu D."/>
            <person name="Zhang X."/>
            <person name="Ji Z."/>
            <person name="Zhao W."/>
            <person name="Sun Y."/>
            <person name="Zhang Z."/>
            <person name="Bao J."/>
            <person name="Han Y."/>
            <person name="Dong L."/>
            <person name="Ji J."/>
            <person name="Chen P."/>
            <person name="Wu S."/>
            <person name="Liu J."/>
            <person name="Xiao Y."/>
            <person name="Bu D."/>
            <person name="Tan J."/>
            <person name="Yang L."/>
            <person name="Ye C."/>
            <person name="Zhang J."/>
            <person name="Xu J."/>
            <person name="Zhou Y."/>
            <person name="Yu Y."/>
            <person name="Zhang B."/>
            <person name="Zhuang S."/>
            <person name="Wei H."/>
            <person name="Liu B."/>
            <person name="Lei M."/>
            <person name="Yu H."/>
            <person name="Li Y."/>
            <person name="Xu H."/>
            <person name="Wei S."/>
            <person name="He X."/>
            <person name="Fang L."/>
            <person name="Zhang Z."/>
            <person name="Zhang Y."/>
            <person name="Huang X."/>
            <person name="Su Z."/>
            <person name="Tong W."/>
            <person name="Li J."/>
            <person name="Tong Z."/>
            <person name="Li S."/>
            <person name="Ye J."/>
            <person name="Wang L."/>
            <person name="Fang L."/>
            <person name="Lei T."/>
            <person name="Chen C.-S."/>
            <person name="Chen H.-C."/>
            <person name="Xu Z."/>
            <person name="Li H."/>
            <person name="Huang H."/>
            <person name="Zhang F."/>
            <person name="Xu H."/>
            <person name="Li N."/>
            <person name="Zhao C."/>
            <person name="Li S."/>
            <person name="Dong L."/>
            <person name="Huang Y."/>
            <person name="Li L."/>
            <person name="Xi Y."/>
            <person name="Qi Q."/>
            <person name="Li W."/>
            <person name="Zhang B."/>
            <person name="Hu W."/>
            <person name="Zhang Y."/>
            <person name="Tian X."/>
            <person name="Jiao Y."/>
            <person name="Liang X."/>
            <person name="Jin J."/>
            <person name="Gao L."/>
            <person name="Zheng W."/>
            <person name="Hao B."/>
            <person name="Liu S.-M."/>
            <person name="Wang W."/>
            <person name="Yuan L."/>
            <person name="Cao M."/>
            <person name="McDermott J."/>
            <person name="Samudrala R."/>
            <person name="Wang J."/>
            <person name="Wong G.K.-S."/>
            <person name="Yang H."/>
        </authorList>
    </citation>
    <scope>NUCLEOTIDE SEQUENCE [LARGE SCALE GENOMIC DNA]</scope>
    <source>
        <strain>cv. Nipponbare</strain>
    </source>
</reference>
<reference key="6">
    <citation type="journal article" date="2003" name="Science">
        <title>Collection, mapping, and annotation of over 28,000 cDNA clones from japonica rice.</title>
        <authorList>
            <consortium name="The rice full-length cDNA consortium"/>
        </authorList>
    </citation>
    <scope>NUCLEOTIDE SEQUENCE [LARGE SCALE MRNA]</scope>
    <source>
        <strain>cv. Nipponbare</strain>
    </source>
</reference>
<reference key="7">
    <citation type="journal article" date="2007" name="Phytochemistry">
        <title>Progesterone: its occurrence in plants and involvement in plant growth.</title>
        <authorList>
            <person name="Iino M."/>
            <person name="Nomura T."/>
            <person name="Tamaki Y."/>
            <person name="Yamada Y."/>
            <person name="Yoneyama K."/>
            <person name="Takeuchi Y."/>
            <person name="Mori M."/>
            <person name="Asami T."/>
            <person name="Nakano T."/>
            <person name="Yokota T."/>
        </authorList>
    </citation>
    <scope>TISSUE SPECIFICITY</scope>
</reference>
<reference key="8">
    <citation type="journal article" date="2015" name="J. Exp. Bot.">
        <title>Differential expression of GS5 regulates grain size in rice.</title>
        <authorList>
            <person name="Xu C."/>
            <person name="Liu Y."/>
            <person name="Li Y."/>
            <person name="Xu X."/>
            <person name="Xu C."/>
            <person name="Li X."/>
            <person name="Xiao J."/>
            <person name="Zhang Q."/>
        </authorList>
    </citation>
    <scope>FUNCTION</scope>
    <scope>INTERACTION WITH SERL2</scope>
</reference>
<accession>Q9FVZ7</accession>
<accession>A3C684</accession>
<accession>Q337F5</accession>
<gene>
    <name evidence="9" type="primary">MSBP1</name>
    <name evidence="14" type="ordered locus">Os10g0502600</name>
    <name evidence="13" type="ordered locus">LOC_Os10g35870</name>
    <name evidence="12" type="ORF">OSJNBb0073N24.4</name>
</gene>
<comment type="function">
    <text evidence="2 11">Binds multiple steroid compounds (By similarity). May act as a coreceptor with SERL2 and enhance its endocytosis (Probable).</text>
</comment>
<comment type="subunit">
    <text evidence="7">Interacts with SERL2.</text>
</comment>
<comment type="subcellular location">
    <subcellularLocation>
        <location evidence="10">Cell membrane</location>
        <topology evidence="10">Single-pass type II membrane protein</topology>
    </subcellularLocation>
</comment>
<comment type="tissue specificity">
    <text evidence="6">Expressed in leaf sheaths, leaf blades and panicles.</text>
</comment>
<comment type="domain">
    <text evidence="10">The cytochrome b5 heme-binding domain lacks the conserved iron-binding His residues at positions 108 and 132.</text>
</comment>
<comment type="similarity">
    <text evidence="10">Belongs to the cytochrome b5 family. MAPR subfamily.</text>
</comment>
<organism>
    <name type="scientific">Oryza sativa subsp. japonica</name>
    <name type="common">Rice</name>
    <dbReference type="NCBI Taxonomy" id="39947"/>
    <lineage>
        <taxon>Eukaryota</taxon>
        <taxon>Viridiplantae</taxon>
        <taxon>Streptophyta</taxon>
        <taxon>Embryophyta</taxon>
        <taxon>Tracheophyta</taxon>
        <taxon>Spermatophyta</taxon>
        <taxon>Magnoliopsida</taxon>
        <taxon>Liliopsida</taxon>
        <taxon>Poales</taxon>
        <taxon>Poaceae</taxon>
        <taxon>BOP clade</taxon>
        <taxon>Oryzoideae</taxon>
        <taxon>Oryzeae</taxon>
        <taxon>Oryzinae</taxon>
        <taxon>Oryza</taxon>
        <taxon>Oryza sativa</taxon>
    </lineage>
</organism>
<protein>
    <recommendedName>
        <fullName evidence="9">Membrane steroid-binding protein 1</fullName>
        <shortName evidence="9">OsMSBP1</shortName>
    </recommendedName>
    <alternativeName>
        <fullName evidence="8">OsMSBP2</fullName>
    </alternativeName>
</protein>
<keyword id="KW-1003">Cell membrane</keyword>
<keyword id="KW-0446">Lipid-binding</keyword>
<keyword id="KW-0472">Membrane</keyword>
<keyword id="KW-1185">Reference proteome</keyword>
<keyword id="KW-0735">Signal-anchor</keyword>
<keyword id="KW-0754">Steroid-binding</keyword>
<keyword id="KW-0812">Transmembrane</keyword>
<keyword id="KW-1133">Transmembrane helix</keyword>
<sequence>MAAAVAELWETLKQAIVAYTGLSPAAFFTAVAAAAALYHVVSGIFAGPPPPPPPRPRDEPEAEPLPPPVQLGEVSEEELRQYDGSDPKKPLLMAIKGQIYDVTQSRMFYGPGGPYALFAGKDASRALAKMSFEPQDLTGDISGLGPFELDALQDWEYKFMGKYVKVGTVKKTVPVEDGAPSTSPETTETAAAAEPEKAPATEEKPREVSSEEVKEKEDAVAAAAPDEGAKES</sequence>
<proteinExistence type="evidence at protein level"/>